<dbReference type="EMBL" id="CP017623">
    <property type="protein sequence ID" value="AOW26612.1"/>
    <property type="molecule type" value="Genomic_DNA"/>
</dbReference>
<dbReference type="RefSeq" id="XP_723531.1">
    <property type="nucleotide sequence ID" value="XM_718438.2"/>
</dbReference>
<dbReference type="FunCoup" id="Q5APC0">
    <property type="interactions" value="57"/>
</dbReference>
<dbReference type="STRING" id="237561.Q5APC0"/>
<dbReference type="GlyCosmos" id="Q5APC0">
    <property type="glycosylation" value="1 site, No reported glycans"/>
</dbReference>
<dbReference type="EnsemblFungi" id="C1_09800C_A-T">
    <property type="protein sequence ID" value="C1_09800C_A-T-p1"/>
    <property type="gene ID" value="C1_09800C_A"/>
</dbReference>
<dbReference type="GeneID" id="3634844"/>
<dbReference type="KEGG" id="cal:CAALFM_C109800CA"/>
<dbReference type="CGD" id="CAL0000196216">
    <property type="gene designation" value="TVP18"/>
</dbReference>
<dbReference type="VEuPathDB" id="FungiDB:C1_09800C_A"/>
<dbReference type="eggNOG" id="ENOG502S3AC">
    <property type="taxonomic scope" value="Eukaryota"/>
</dbReference>
<dbReference type="HOGENOM" id="CLU_118698_1_0_1"/>
<dbReference type="InParanoid" id="Q5APC0"/>
<dbReference type="OMA" id="IYAQWLG"/>
<dbReference type="OrthoDB" id="5591789at2759"/>
<dbReference type="PRO" id="PR:Q5APC0"/>
<dbReference type="Proteomes" id="UP000000559">
    <property type="component" value="Chromosome 1"/>
</dbReference>
<dbReference type="GO" id="GO:0000139">
    <property type="term" value="C:Golgi membrane"/>
    <property type="evidence" value="ECO:0000318"/>
    <property type="project" value="GO_Central"/>
</dbReference>
<dbReference type="GO" id="GO:0016192">
    <property type="term" value="P:vesicle-mediated transport"/>
    <property type="evidence" value="ECO:0000318"/>
    <property type="project" value="GO_Central"/>
</dbReference>
<dbReference type="InterPro" id="IPR019365">
    <property type="entry name" value="TVP18/Ca-channel_flower"/>
</dbReference>
<dbReference type="PANTHER" id="PTHR13314">
    <property type="entry name" value="CALCIUM CHANNEL FLOWER HOMOLOG"/>
    <property type="match status" value="1"/>
</dbReference>
<dbReference type="PANTHER" id="PTHR13314:SF2">
    <property type="entry name" value="CALCIUM CHANNEL FLOWER HOMOLOG"/>
    <property type="match status" value="1"/>
</dbReference>
<dbReference type="Pfam" id="PF10233">
    <property type="entry name" value="Cg6151-P"/>
    <property type="match status" value="1"/>
</dbReference>
<dbReference type="SMART" id="SM01077">
    <property type="entry name" value="Cg6151-P"/>
    <property type="match status" value="1"/>
</dbReference>
<keyword id="KW-0325">Glycoprotein</keyword>
<keyword id="KW-0333">Golgi apparatus</keyword>
<keyword id="KW-0472">Membrane</keyword>
<keyword id="KW-1185">Reference proteome</keyword>
<keyword id="KW-0812">Transmembrane</keyword>
<keyword id="KW-1133">Transmembrane helix</keyword>
<protein>
    <recommendedName>
        <fullName>Golgi apparatus membrane protein TVP18</fullName>
    </recommendedName>
</protein>
<accession>Q5APC0</accession>
<accession>A0A1D8PEP3</accession>
<organism>
    <name type="scientific">Candida albicans (strain SC5314 / ATCC MYA-2876)</name>
    <name type="common">Yeast</name>
    <dbReference type="NCBI Taxonomy" id="237561"/>
    <lineage>
        <taxon>Eukaryota</taxon>
        <taxon>Fungi</taxon>
        <taxon>Dikarya</taxon>
        <taxon>Ascomycota</taxon>
        <taxon>Saccharomycotina</taxon>
        <taxon>Pichiomycetes</taxon>
        <taxon>Debaryomycetaceae</taxon>
        <taxon>Candida/Lodderomyces clade</taxon>
        <taxon>Candida</taxon>
    </lineage>
</organism>
<reference key="1">
    <citation type="journal article" date="2004" name="Proc. Natl. Acad. Sci. U.S.A.">
        <title>The diploid genome sequence of Candida albicans.</title>
        <authorList>
            <person name="Jones T."/>
            <person name="Federspiel N.A."/>
            <person name="Chibana H."/>
            <person name="Dungan J."/>
            <person name="Kalman S."/>
            <person name="Magee B.B."/>
            <person name="Newport G."/>
            <person name="Thorstenson Y.R."/>
            <person name="Agabian N."/>
            <person name="Magee P.T."/>
            <person name="Davis R.W."/>
            <person name="Scherer S."/>
        </authorList>
    </citation>
    <scope>NUCLEOTIDE SEQUENCE [LARGE SCALE GENOMIC DNA]</scope>
    <source>
        <strain>SC5314 / ATCC MYA-2876</strain>
    </source>
</reference>
<reference key="2">
    <citation type="journal article" date="2007" name="Genome Biol.">
        <title>Assembly of the Candida albicans genome into sixteen supercontigs aligned on the eight chromosomes.</title>
        <authorList>
            <person name="van het Hoog M."/>
            <person name="Rast T.J."/>
            <person name="Martchenko M."/>
            <person name="Grindle S."/>
            <person name="Dignard D."/>
            <person name="Hogues H."/>
            <person name="Cuomo C."/>
            <person name="Berriman M."/>
            <person name="Scherer S."/>
            <person name="Magee B.B."/>
            <person name="Whiteway M."/>
            <person name="Chibana H."/>
            <person name="Nantel A."/>
            <person name="Magee P.T."/>
        </authorList>
    </citation>
    <scope>GENOME REANNOTATION</scope>
    <source>
        <strain>SC5314 / ATCC MYA-2876</strain>
    </source>
</reference>
<reference key="3">
    <citation type="journal article" date="2013" name="Genome Biol.">
        <title>Assembly of a phased diploid Candida albicans genome facilitates allele-specific measurements and provides a simple model for repeat and indel structure.</title>
        <authorList>
            <person name="Muzzey D."/>
            <person name="Schwartz K."/>
            <person name="Weissman J.S."/>
            <person name="Sherlock G."/>
        </authorList>
    </citation>
    <scope>NUCLEOTIDE SEQUENCE [LARGE SCALE GENOMIC DNA]</scope>
    <scope>GENOME REANNOTATION</scope>
    <source>
        <strain>SC5314 / ATCC MYA-2876</strain>
    </source>
</reference>
<sequence length="173" mass="18800">MALADLALSNIWGGLSSDFKKKNFSLYGQWISILTIFLCLALGVANIFHLGPIIVFSIICIVQGLIVLFVEVPFLLKICPLTDTFVNFVRKFDGNLPRCGFYLLNAVIQYLSLTLQATSLLVVAILFTISSACYALAALKHQEYLKSSLDVTGTGSGGALEAQVGEHVVRNVL</sequence>
<proteinExistence type="inferred from homology"/>
<evidence type="ECO:0000250" key="1"/>
<evidence type="ECO:0000255" key="2"/>
<evidence type="ECO:0000305" key="3"/>
<comment type="function">
    <text evidence="1">Golgi membrane protein involved in vesicular trafficking.</text>
</comment>
<comment type="subcellular location">
    <subcellularLocation>
        <location evidence="1">Golgi apparatus membrane</location>
        <topology evidence="1">Multi-pass membrane protein</topology>
    </subcellularLocation>
</comment>
<comment type="similarity">
    <text evidence="3">Belongs to the TVP18 family.</text>
</comment>
<gene>
    <name type="primary">TVP18</name>
    <name type="ordered locus">CAALFM_C109800CA</name>
    <name type="ORF">CaO19.12308</name>
    <name type="ORF">CaO19.4845</name>
</gene>
<feature type="chain" id="PRO_0000343015" description="Golgi apparatus membrane protein TVP18">
    <location>
        <begin position="1"/>
        <end position="173"/>
    </location>
</feature>
<feature type="transmembrane region" description="Helical" evidence="2">
    <location>
        <begin position="28"/>
        <end position="48"/>
    </location>
</feature>
<feature type="transmembrane region" description="Helical" evidence="2">
    <location>
        <begin position="50"/>
        <end position="70"/>
    </location>
</feature>
<feature type="transmembrane region" description="Helical" evidence="2">
    <location>
        <begin position="96"/>
        <end position="113"/>
    </location>
</feature>
<feature type="transmembrane region" description="Helical" evidence="2">
    <location>
        <begin position="119"/>
        <end position="139"/>
    </location>
</feature>
<feature type="glycosylation site" description="N-linked (GlcNAc...) asparagine" evidence="2">
    <location>
        <position position="23"/>
    </location>
</feature>
<name>TVP18_CANAL</name>